<organism>
    <name type="scientific">Salmonella paratyphi C (strain RKS4594)</name>
    <dbReference type="NCBI Taxonomy" id="476213"/>
    <lineage>
        <taxon>Bacteria</taxon>
        <taxon>Pseudomonadati</taxon>
        <taxon>Pseudomonadota</taxon>
        <taxon>Gammaproteobacteria</taxon>
        <taxon>Enterobacterales</taxon>
        <taxon>Enterobacteriaceae</taxon>
        <taxon>Salmonella</taxon>
    </lineage>
</organism>
<protein>
    <recommendedName>
        <fullName evidence="1">Phosphoserine aminotransferase</fullName>
        <ecNumber evidence="1">2.6.1.52</ecNumber>
    </recommendedName>
    <alternativeName>
        <fullName evidence="1">Phosphohydroxythreonine aminotransferase</fullName>
        <shortName evidence="1">PSAT</shortName>
    </alternativeName>
</protein>
<keyword id="KW-0028">Amino-acid biosynthesis</keyword>
<keyword id="KW-0032">Aminotransferase</keyword>
<keyword id="KW-0963">Cytoplasm</keyword>
<keyword id="KW-0663">Pyridoxal phosphate</keyword>
<keyword id="KW-0664">Pyridoxine biosynthesis</keyword>
<keyword id="KW-0718">Serine biosynthesis</keyword>
<keyword id="KW-0808">Transferase</keyword>
<reference key="1">
    <citation type="journal article" date="2009" name="PLoS ONE">
        <title>Salmonella paratyphi C: genetic divergence from Salmonella choleraesuis and pathogenic convergence with Salmonella typhi.</title>
        <authorList>
            <person name="Liu W.-Q."/>
            <person name="Feng Y."/>
            <person name="Wang Y."/>
            <person name="Zou Q.-H."/>
            <person name="Chen F."/>
            <person name="Guo J.-T."/>
            <person name="Peng Y.-H."/>
            <person name="Jin Y."/>
            <person name="Li Y.-G."/>
            <person name="Hu S.-N."/>
            <person name="Johnston R.N."/>
            <person name="Liu G.-R."/>
            <person name="Liu S.-L."/>
        </authorList>
    </citation>
    <scope>NUCLEOTIDE SEQUENCE [LARGE SCALE GENOMIC DNA]</scope>
    <source>
        <strain>RKS4594</strain>
    </source>
</reference>
<evidence type="ECO:0000255" key="1">
    <source>
        <dbReference type="HAMAP-Rule" id="MF_00160"/>
    </source>
</evidence>
<accession>C0PXU3</accession>
<comment type="function">
    <text evidence="1">Catalyzes the reversible conversion of 3-phosphohydroxypyruvate to phosphoserine and of 3-hydroxy-2-oxo-4-phosphonooxybutanoate to phosphohydroxythreonine.</text>
</comment>
<comment type="catalytic activity">
    <reaction evidence="1">
        <text>O-phospho-L-serine + 2-oxoglutarate = 3-phosphooxypyruvate + L-glutamate</text>
        <dbReference type="Rhea" id="RHEA:14329"/>
        <dbReference type="ChEBI" id="CHEBI:16810"/>
        <dbReference type="ChEBI" id="CHEBI:18110"/>
        <dbReference type="ChEBI" id="CHEBI:29985"/>
        <dbReference type="ChEBI" id="CHEBI:57524"/>
        <dbReference type="EC" id="2.6.1.52"/>
    </reaction>
</comment>
<comment type="catalytic activity">
    <reaction evidence="1">
        <text>4-(phosphooxy)-L-threonine + 2-oxoglutarate = (R)-3-hydroxy-2-oxo-4-phosphooxybutanoate + L-glutamate</text>
        <dbReference type="Rhea" id="RHEA:16573"/>
        <dbReference type="ChEBI" id="CHEBI:16810"/>
        <dbReference type="ChEBI" id="CHEBI:29985"/>
        <dbReference type="ChEBI" id="CHEBI:58452"/>
        <dbReference type="ChEBI" id="CHEBI:58538"/>
        <dbReference type="EC" id="2.6.1.52"/>
    </reaction>
</comment>
<comment type="cofactor">
    <cofactor evidence="1">
        <name>pyridoxal 5'-phosphate</name>
        <dbReference type="ChEBI" id="CHEBI:597326"/>
    </cofactor>
    <text evidence="1">Binds 1 pyridoxal phosphate per subunit.</text>
</comment>
<comment type="pathway">
    <text evidence="1">Amino-acid biosynthesis; L-serine biosynthesis; L-serine from 3-phospho-D-glycerate: step 2/3.</text>
</comment>
<comment type="pathway">
    <text evidence="1">Cofactor biosynthesis; pyridoxine 5'-phosphate biosynthesis; pyridoxine 5'-phosphate from D-erythrose 4-phosphate: step 3/5.</text>
</comment>
<comment type="subunit">
    <text evidence="1">Homodimer.</text>
</comment>
<comment type="subcellular location">
    <subcellularLocation>
        <location evidence="1">Cytoplasm</location>
    </subcellularLocation>
</comment>
<comment type="similarity">
    <text evidence="1">Belongs to the class-V pyridoxal-phosphate-dependent aminotransferase family. SerC subfamily.</text>
</comment>
<dbReference type="EC" id="2.6.1.52" evidence="1"/>
<dbReference type="EMBL" id="CP000857">
    <property type="protein sequence ID" value="ACN45143.1"/>
    <property type="molecule type" value="Genomic_DNA"/>
</dbReference>
<dbReference type="RefSeq" id="WP_000079591.1">
    <property type="nucleotide sequence ID" value="NC_012125.1"/>
</dbReference>
<dbReference type="SMR" id="C0PXU3"/>
<dbReference type="KEGG" id="sei:SPC_0976"/>
<dbReference type="HOGENOM" id="CLU_034866_0_2_6"/>
<dbReference type="UniPathway" id="UPA00135">
    <property type="reaction ID" value="UER00197"/>
</dbReference>
<dbReference type="UniPathway" id="UPA00244">
    <property type="reaction ID" value="UER00311"/>
</dbReference>
<dbReference type="Proteomes" id="UP000001599">
    <property type="component" value="Chromosome"/>
</dbReference>
<dbReference type="GO" id="GO:0005737">
    <property type="term" value="C:cytoplasm"/>
    <property type="evidence" value="ECO:0007669"/>
    <property type="project" value="UniProtKB-SubCell"/>
</dbReference>
<dbReference type="GO" id="GO:0004648">
    <property type="term" value="F:O-phospho-L-serine:2-oxoglutarate aminotransferase activity"/>
    <property type="evidence" value="ECO:0007669"/>
    <property type="project" value="UniProtKB-UniRule"/>
</dbReference>
<dbReference type="GO" id="GO:0030170">
    <property type="term" value="F:pyridoxal phosphate binding"/>
    <property type="evidence" value="ECO:0007669"/>
    <property type="project" value="UniProtKB-UniRule"/>
</dbReference>
<dbReference type="GO" id="GO:0006564">
    <property type="term" value="P:L-serine biosynthetic process"/>
    <property type="evidence" value="ECO:0007669"/>
    <property type="project" value="UniProtKB-UniRule"/>
</dbReference>
<dbReference type="GO" id="GO:0008615">
    <property type="term" value="P:pyridoxine biosynthetic process"/>
    <property type="evidence" value="ECO:0007669"/>
    <property type="project" value="UniProtKB-UniRule"/>
</dbReference>
<dbReference type="CDD" id="cd00611">
    <property type="entry name" value="PSAT_like"/>
    <property type="match status" value="1"/>
</dbReference>
<dbReference type="FunFam" id="3.40.640.10:FF:000010">
    <property type="entry name" value="Phosphoserine aminotransferase"/>
    <property type="match status" value="1"/>
</dbReference>
<dbReference type="FunFam" id="3.90.1150.10:FF:000006">
    <property type="entry name" value="Phosphoserine aminotransferase"/>
    <property type="match status" value="1"/>
</dbReference>
<dbReference type="Gene3D" id="3.90.1150.10">
    <property type="entry name" value="Aspartate Aminotransferase, domain 1"/>
    <property type="match status" value="1"/>
</dbReference>
<dbReference type="Gene3D" id="3.40.640.10">
    <property type="entry name" value="Type I PLP-dependent aspartate aminotransferase-like (Major domain)"/>
    <property type="match status" value="1"/>
</dbReference>
<dbReference type="HAMAP" id="MF_00160">
    <property type="entry name" value="SerC_aminotrans_5"/>
    <property type="match status" value="1"/>
</dbReference>
<dbReference type="InterPro" id="IPR000192">
    <property type="entry name" value="Aminotrans_V_dom"/>
</dbReference>
<dbReference type="InterPro" id="IPR020578">
    <property type="entry name" value="Aminotrans_V_PyrdxlP_BS"/>
</dbReference>
<dbReference type="InterPro" id="IPR022278">
    <property type="entry name" value="Pser_aminoTfrase"/>
</dbReference>
<dbReference type="InterPro" id="IPR015424">
    <property type="entry name" value="PyrdxlP-dep_Trfase"/>
</dbReference>
<dbReference type="InterPro" id="IPR015421">
    <property type="entry name" value="PyrdxlP-dep_Trfase_major"/>
</dbReference>
<dbReference type="InterPro" id="IPR015422">
    <property type="entry name" value="PyrdxlP-dep_Trfase_small"/>
</dbReference>
<dbReference type="NCBIfam" id="NF003764">
    <property type="entry name" value="PRK05355.1"/>
    <property type="match status" value="1"/>
</dbReference>
<dbReference type="NCBIfam" id="TIGR01364">
    <property type="entry name" value="serC_1"/>
    <property type="match status" value="1"/>
</dbReference>
<dbReference type="PANTHER" id="PTHR43247">
    <property type="entry name" value="PHOSPHOSERINE AMINOTRANSFERASE"/>
    <property type="match status" value="1"/>
</dbReference>
<dbReference type="PANTHER" id="PTHR43247:SF1">
    <property type="entry name" value="PHOSPHOSERINE AMINOTRANSFERASE"/>
    <property type="match status" value="1"/>
</dbReference>
<dbReference type="Pfam" id="PF00266">
    <property type="entry name" value="Aminotran_5"/>
    <property type="match status" value="1"/>
</dbReference>
<dbReference type="PIRSF" id="PIRSF000525">
    <property type="entry name" value="SerC"/>
    <property type="match status" value="1"/>
</dbReference>
<dbReference type="SUPFAM" id="SSF53383">
    <property type="entry name" value="PLP-dependent transferases"/>
    <property type="match status" value="1"/>
</dbReference>
<dbReference type="PROSITE" id="PS00595">
    <property type="entry name" value="AA_TRANSFER_CLASS_5"/>
    <property type="match status" value="1"/>
</dbReference>
<name>SERC_SALPC</name>
<feature type="chain" id="PRO_1000203558" description="Phosphoserine aminotransferase">
    <location>
        <begin position="1"/>
        <end position="362"/>
    </location>
</feature>
<feature type="binding site" evidence="1">
    <location>
        <position position="9"/>
    </location>
    <ligand>
        <name>L-glutamate</name>
        <dbReference type="ChEBI" id="CHEBI:29985"/>
    </ligand>
</feature>
<feature type="binding site" evidence="1">
    <location>
        <position position="42"/>
    </location>
    <ligand>
        <name>L-glutamate</name>
        <dbReference type="ChEBI" id="CHEBI:29985"/>
    </ligand>
</feature>
<feature type="binding site" evidence="1">
    <location>
        <begin position="76"/>
        <end position="77"/>
    </location>
    <ligand>
        <name>pyridoxal 5'-phosphate</name>
        <dbReference type="ChEBI" id="CHEBI:597326"/>
    </ligand>
</feature>
<feature type="binding site" evidence="1">
    <location>
        <position position="102"/>
    </location>
    <ligand>
        <name>pyridoxal 5'-phosphate</name>
        <dbReference type="ChEBI" id="CHEBI:597326"/>
    </ligand>
</feature>
<feature type="binding site" evidence="1">
    <location>
        <position position="153"/>
    </location>
    <ligand>
        <name>pyridoxal 5'-phosphate</name>
        <dbReference type="ChEBI" id="CHEBI:597326"/>
    </ligand>
</feature>
<feature type="binding site" evidence="1">
    <location>
        <position position="174"/>
    </location>
    <ligand>
        <name>pyridoxal 5'-phosphate</name>
        <dbReference type="ChEBI" id="CHEBI:597326"/>
    </ligand>
</feature>
<feature type="binding site" evidence="1">
    <location>
        <position position="197"/>
    </location>
    <ligand>
        <name>pyridoxal 5'-phosphate</name>
        <dbReference type="ChEBI" id="CHEBI:597326"/>
    </ligand>
</feature>
<feature type="binding site" evidence="1">
    <location>
        <begin position="239"/>
        <end position="240"/>
    </location>
    <ligand>
        <name>pyridoxal 5'-phosphate</name>
        <dbReference type="ChEBI" id="CHEBI:597326"/>
    </ligand>
</feature>
<feature type="modified residue" description="N6-(pyridoxal phosphate)lysine" evidence="1">
    <location>
        <position position="198"/>
    </location>
</feature>
<proteinExistence type="inferred from homology"/>
<gene>
    <name evidence="1" type="primary">serC</name>
    <name type="ordered locus">SPC_0976</name>
</gene>
<sequence length="362" mass="39885">MAQVFNFSSGPAMLPAEVLKLAQQELRDWHGLGTSVMEISHRGKEFIQVAEEAEQDFRDLLNIPSNYKVLFCHGGGRGQFAGVPLNLLGDKTTADYVDAGYWAASAIKEAKKYCAPQIIDAKITVDGKRAVKPMREWQLSDNAAYLHYCPNETIDGIAIDETPDFGPEVVVTADFSSTILSAPLDVSRYGVIYAGAQKNIGPAGLTLVIVREDLLGKAHESCPSILDYTVLNDNDSMFNTPPTFAWYLSGLVFKWLKAQGGVAAMHKINQQKAELLYGVIDNSDFYRNDVAQANRSRMNVPFQLADNTLDKVFLEESFAAGLHALKGHRVVGGMRASIYNAMPIEGVKALTDFMIDFERRHG</sequence>